<gene>
    <name type="primary">hindIIR</name>
    <name type="ordered locus">HI_0512</name>
</gene>
<protein>
    <recommendedName>
        <fullName evidence="2">Type II restriction enzyme HindII</fullName>
        <shortName>R.HindII</shortName>
        <ecNumber>3.1.21.4</ecNumber>
    </recommendedName>
    <alternativeName>
        <fullName>Endonuclease HindII</fullName>
    </alternativeName>
    <alternativeName>
        <fullName>Type-2 restriction enzyme HindII</fullName>
    </alternativeName>
</protein>
<feature type="initiator methionine" description="Removed" evidence="1">
    <location>
        <position position="1"/>
    </location>
</feature>
<feature type="chain" id="PRO_0000077320" description="Type II restriction enzyme HindII">
    <location>
        <begin position="2"/>
        <end position="258"/>
    </location>
</feature>
<evidence type="ECO:0000250" key="1"/>
<evidence type="ECO:0000303" key="2">
    <source>
    </source>
</evidence>
<accession>P44413</accession>
<organism>
    <name type="scientific">Haemophilus influenzae (strain ATCC 51907 / DSM 11121 / KW20 / Rd)</name>
    <dbReference type="NCBI Taxonomy" id="71421"/>
    <lineage>
        <taxon>Bacteria</taxon>
        <taxon>Pseudomonadati</taxon>
        <taxon>Pseudomonadota</taxon>
        <taxon>Gammaproteobacteria</taxon>
        <taxon>Pasteurellales</taxon>
        <taxon>Pasteurellaceae</taxon>
        <taxon>Haemophilus</taxon>
    </lineage>
</organism>
<proteinExistence type="inferred from homology"/>
<reference key="1">
    <citation type="journal article" date="1995" name="Science">
        <title>Whole-genome random sequencing and assembly of Haemophilus influenzae Rd.</title>
        <authorList>
            <person name="Fleischmann R.D."/>
            <person name="Adams M.D."/>
            <person name="White O."/>
            <person name="Clayton R.A."/>
            <person name="Kirkness E.F."/>
            <person name="Kerlavage A.R."/>
            <person name="Bult C.J."/>
            <person name="Tomb J.-F."/>
            <person name="Dougherty B.A."/>
            <person name="Merrick J.M."/>
            <person name="McKenney K."/>
            <person name="Sutton G.G."/>
            <person name="FitzHugh W."/>
            <person name="Fields C.A."/>
            <person name="Gocayne J.D."/>
            <person name="Scott J.D."/>
            <person name="Shirley R."/>
            <person name="Liu L.-I."/>
            <person name="Glodek A."/>
            <person name="Kelley J.M."/>
            <person name="Weidman J.F."/>
            <person name="Phillips C.A."/>
            <person name="Spriggs T."/>
            <person name="Hedblom E."/>
            <person name="Cotton M.D."/>
            <person name="Utterback T.R."/>
            <person name="Hanna M.C."/>
            <person name="Nguyen D.T."/>
            <person name="Saudek D.M."/>
            <person name="Brandon R.C."/>
            <person name="Fine L.D."/>
            <person name="Fritchman J.L."/>
            <person name="Fuhrmann J.L."/>
            <person name="Geoghagen N.S.M."/>
            <person name="Gnehm C.L."/>
            <person name="McDonald L.A."/>
            <person name="Small K.V."/>
            <person name="Fraser C.M."/>
            <person name="Smith H.O."/>
            <person name="Venter J.C."/>
        </authorList>
    </citation>
    <scope>NUCLEOTIDE SEQUENCE [LARGE SCALE GENOMIC DNA]</scope>
    <source>
        <strain>ATCC 51907 / DSM 11121 / KW20 / Rd</strain>
    </source>
</reference>
<reference key="2">
    <citation type="journal article" date="2003" name="Nucleic Acids Res.">
        <title>A nomenclature for restriction enzymes, DNA methyltransferases, homing endonucleases and their genes.</title>
        <authorList>
            <person name="Roberts R.J."/>
            <person name="Belfort M."/>
            <person name="Bestor T."/>
            <person name="Bhagwat A.S."/>
            <person name="Bickle T.A."/>
            <person name="Bitinaite J."/>
            <person name="Blumenthal R.M."/>
            <person name="Degtyarev S.K."/>
            <person name="Dryden D.T."/>
            <person name="Dybvig K."/>
            <person name="Firman K."/>
            <person name="Gromova E.S."/>
            <person name="Gumport R.I."/>
            <person name="Halford S.E."/>
            <person name="Hattman S."/>
            <person name="Heitman J."/>
            <person name="Hornby D.P."/>
            <person name="Janulaitis A."/>
            <person name="Jeltsch A."/>
            <person name="Josephsen J."/>
            <person name="Kiss A."/>
            <person name="Klaenhammer T.R."/>
            <person name="Kobayashi I."/>
            <person name="Kong H."/>
            <person name="Krueger D.H."/>
            <person name="Lacks S."/>
            <person name="Marinus M.G."/>
            <person name="Miyahara M."/>
            <person name="Morgan R.D."/>
            <person name="Murray N.E."/>
            <person name="Nagaraja V."/>
            <person name="Piekarowicz A."/>
            <person name="Pingoud A."/>
            <person name="Raleigh E."/>
            <person name="Rao D.N."/>
            <person name="Reich N."/>
            <person name="Repin V.E."/>
            <person name="Selker E.U."/>
            <person name="Shaw P.C."/>
            <person name="Stein D.C."/>
            <person name="Stoddard B.L."/>
            <person name="Szybalski W."/>
            <person name="Trautner T.A."/>
            <person name="Van Etten J.L."/>
            <person name="Vitor J.M."/>
            <person name="Wilson G.G."/>
            <person name="Xu S.Y."/>
        </authorList>
    </citation>
    <scope>NOMENCLATURE</scope>
    <scope>SUBTYPE</scope>
</reference>
<sequence length="258" mass="29929">MSFIKPIYQDINSILIGQKVKRPKSGTLSGHAAGEPFEKLVYKFLKENLSDLTFKQYEYLNDLFMKKPAIIGHEARYKLFNSPTLLFLLSRGKAATENWSIENLFEEKQNDTADILLVKDQFYELLDVKTRNISKSAQAPNIISAYKLAQTCAKMIDNKEFDLFDINYLEVDWELNGEDLVCVSTSFAELFKSEPSELYINWAAAMQIQFHVRDLDQGFNGTREEWAKSYLKHFVTQAEQRAISMIDKFVKPFKKYIL</sequence>
<name>T2D2_HAEIN</name>
<comment type="function">
    <text evidence="2">A P subtype restriction enzyme that recognizes the double-stranded sequence 5'-GTYRAC-3' and cleaves after Y-3.</text>
</comment>
<comment type="catalytic activity">
    <reaction>
        <text>Endonucleolytic cleavage of DNA to give specific double-stranded fragments with terminal 5'-phosphates.</text>
        <dbReference type="EC" id="3.1.21.4"/>
    </reaction>
</comment>
<dbReference type="EC" id="3.1.21.4"/>
<dbReference type="EMBL" id="L42023">
    <property type="protein sequence ID" value="AAC22170.1"/>
    <property type="molecule type" value="Genomic_DNA"/>
</dbReference>
<dbReference type="PIR" id="E64073">
    <property type="entry name" value="E64073"/>
</dbReference>
<dbReference type="RefSeq" id="NP_438670.1">
    <property type="nucleotide sequence ID" value="NC_000907.1"/>
</dbReference>
<dbReference type="SMR" id="P44413"/>
<dbReference type="STRING" id="71421.HI_0512"/>
<dbReference type="REBASE" id="1150">
    <property type="entry name" value="HindII"/>
</dbReference>
<dbReference type="EnsemblBacteria" id="AAC22170">
    <property type="protein sequence ID" value="AAC22170"/>
    <property type="gene ID" value="HI_0512"/>
</dbReference>
<dbReference type="KEGG" id="hin:HI_0512"/>
<dbReference type="PATRIC" id="fig|71421.8.peg.531"/>
<dbReference type="eggNOG" id="ENOG502ZAYM">
    <property type="taxonomic scope" value="Bacteria"/>
</dbReference>
<dbReference type="HOGENOM" id="CLU_1088820_0_0_6"/>
<dbReference type="OrthoDB" id="1082220at2"/>
<dbReference type="BioCyc" id="HINF71421:G1GJ1-525-MONOMER"/>
<dbReference type="PRO" id="PR:P44413"/>
<dbReference type="Proteomes" id="UP000000579">
    <property type="component" value="Chromosome"/>
</dbReference>
<dbReference type="GO" id="GO:0003677">
    <property type="term" value="F:DNA binding"/>
    <property type="evidence" value="ECO:0007669"/>
    <property type="project" value="InterPro"/>
</dbReference>
<dbReference type="GO" id="GO:0009036">
    <property type="term" value="F:type II site-specific deoxyribonuclease activity"/>
    <property type="evidence" value="ECO:0007669"/>
    <property type="project" value="UniProtKB-EC"/>
</dbReference>
<dbReference type="GO" id="GO:0009307">
    <property type="term" value="P:DNA restriction-modification system"/>
    <property type="evidence" value="ECO:0007669"/>
    <property type="project" value="UniProtKB-KW"/>
</dbReference>
<dbReference type="CDD" id="cd22329">
    <property type="entry name" value="HincII-like"/>
    <property type="match status" value="1"/>
</dbReference>
<dbReference type="Gene3D" id="3.40.600.10">
    <property type="entry name" value="DNA mismatch repair MutH/Restriction endonuclease, type II"/>
    <property type="match status" value="1"/>
</dbReference>
<dbReference type="InterPro" id="IPR037057">
    <property type="entry name" value="DNA_rep_MutH/T2_RE_sf"/>
</dbReference>
<dbReference type="InterPro" id="IPR011335">
    <property type="entry name" value="Restrct_endonuc-II-like"/>
</dbReference>
<dbReference type="InterPro" id="IPR015307">
    <property type="entry name" value="Restrct_endonuc_II_HincII"/>
</dbReference>
<dbReference type="Pfam" id="PF09226">
    <property type="entry name" value="Endonuc-HincII"/>
    <property type="match status" value="1"/>
</dbReference>
<dbReference type="SUPFAM" id="SSF52980">
    <property type="entry name" value="Restriction endonuclease-like"/>
    <property type="match status" value="1"/>
</dbReference>
<keyword id="KW-0255">Endonuclease</keyword>
<keyword id="KW-0378">Hydrolase</keyword>
<keyword id="KW-0540">Nuclease</keyword>
<keyword id="KW-1185">Reference proteome</keyword>
<keyword id="KW-0680">Restriction system</keyword>